<comment type="catalytic activity">
    <reaction evidence="1">
        <text>tRNA(Leu) + L-leucine + ATP = L-leucyl-tRNA(Leu) + AMP + diphosphate</text>
        <dbReference type="Rhea" id="RHEA:11688"/>
        <dbReference type="Rhea" id="RHEA-COMP:9613"/>
        <dbReference type="Rhea" id="RHEA-COMP:9622"/>
        <dbReference type="ChEBI" id="CHEBI:30616"/>
        <dbReference type="ChEBI" id="CHEBI:33019"/>
        <dbReference type="ChEBI" id="CHEBI:57427"/>
        <dbReference type="ChEBI" id="CHEBI:78442"/>
        <dbReference type="ChEBI" id="CHEBI:78494"/>
        <dbReference type="ChEBI" id="CHEBI:456215"/>
        <dbReference type="EC" id="6.1.1.4"/>
    </reaction>
</comment>
<comment type="subcellular location">
    <subcellularLocation>
        <location evidence="1">Cytoplasm</location>
    </subcellularLocation>
</comment>
<comment type="similarity">
    <text evidence="1">Belongs to the class-I aminoacyl-tRNA synthetase family.</text>
</comment>
<sequence length="820" mass="94245">MNESYQPTLIEQLAQEYWEENETFEVKEDLSREKFYCLSMLPYPSGDLHMGHVRNYTIGDVIARYQIHKGRNVLQPMGWDAFGLPAENAAIQRELPPAEWTRKNIKKMRKQLKQLGFAYDWSREITTCDSTYYRWEQWLFLQLYKKGLAYKKNAIVNWDPVDQTVLANEQIVDGRGWRSGAVVERREISQWFLKITDYSEELLKDLDELKEWPEQVITMQRNWIGQSQGVIINFNLEKGPDKLQVYTTRPDTLMGVTYLAIAPEHPLAKERAKKSKKIAAFLKKCKQTRVAEADIATQEKEGIDSGLFAVHPLSKEKLPIWIANFVLMEYASGVVMAVPAHDERDHEFALKYDLPLKPVIEPADGHDWDYNQAAYTNPGKLINSGSFNDIDSKTAFNVIADYLKNNGAGSRQTHYRLRDWGISRQRYWGTPIPIIYCKTCGTVPVPENQLPVLLPEDIIPTGHGSPLKETASFYKTRCPVCNKPATRETDTMDTFVESSWYYARYSCPDQDKVMLDDRAKYWTPVDQYIGGIEHAVMHLLYARFMHKILRDLGLLNSNEPFIRLLTQGMVLKDGAKMSKSKGNVVTPQSLIKKYGADTVRLFIIFAAPPEQDLEWSDSGVEGAYRFLKKLWGFSYRIKDALLAVNQQKERSNYQWEAPEHRQTRQQIHECLQQANIDMERLQFNTVVSAVMKILNILIKLTTDNDAEAHLIREGTGILLRLLSPITPHISHHLWQSLGFGGDILDTPWPRPDPKALQTTELELIVQINGKLRGRIQVPTEASKEIIESTALNQENVQRHLADKKIKKVIVVPKKLINIVV</sequence>
<proteinExistence type="inferred from homology"/>
<protein>
    <recommendedName>
        <fullName evidence="1">Leucine--tRNA ligase</fullName>
        <ecNumber evidence="1">6.1.1.4</ecNumber>
    </recommendedName>
    <alternativeName>
        <fullName evidence="1">Leucyl-tRNA synthetase</fullName>
        <shortName evidence="1">LeuRS</shortName>
    </alternativeName>
</protein>
<evidence type="ECO:0000255" key="1">
    <source>
        <dbReference type="HAMAP-Rule" id="MF_00049"/>
    </source>
</evidence>
<name>SYL_COXBN</name>
<organism>
    <name type="scientific">Coxiella burnetii (strain Dugway 5J108-111)</name>
    <dbReference type="NCBI Taxonomy" id="434922"/>
    <lineage>
        <taxon>Bacteria</taxon>
        <taxon>Pseudomonadati</taxon>
        <taxon>Pseudomonadota</taxon>
        <taxon>Gammaproteobacteria</taxon>
        <taxon>Legionellales</taxon>
        <taxon>Coxiellaceae</taxon>
        <taxon>Coxiella</taxon>
    </lineage>
</organism>
<gene>
    <name evidence="1" type="primary">leuS</name>
    <name type="ordered locus">CBUD_1506</name>
</gene>
<reference key="1">
    <citation type="journal article" date="2009" name="Infect. Immun.">
        <title>Comparative genomics reveal extensive transposon-mediated genomic plasticity and diversity among potential effector proteins within the genus Coxiella.</title>
        <authorList>
            <person name="Beare P.A."/>
            <person name="Unsworth N."/>
            <person name="Andoh M."/>
            <person name="Voth D.E."/>
            <person name="Omsland A."/>
            <person name="Gilk S.D."/>
            <person name="Williams K.P."/>
            <person name="Sobral B.W."/>
            <person name="Kupko J.J. III"/>
            <person name="Porcella S.F."/>
            <person name="Samuel J.E."/>
            <person name="Heinzen R.A."/>
        </authorList>
    </citation>
    <scope>NUCLEOTIDE SEQUENCE [LARGE SCALE GENOMIC DNA]</scope>
    <source>
        <strain>Dugway 5J108-111</strain>
    </source>
</reference>
<accession>A9KCQ4</accession>
<feature type="chain" id="PRO_1000074829" description="Leucine--tRNA ligase">
    <location>
        <begin position="1"/>
        <end position="820"/>
    </location>
</feature>
<feature type="short sequence motif" description="'HIGH' region">
    <location>
        <begin position="42"/>
        <end position="52"/>
    </location>
</feature>
<feature type="short sequence motif" description="'KMSKS' region">
    <location>
        <begin position="576"/>
        <end position="580"/>
    </location>
</feature>
<feature type="binding site" evidence="1">
    <location>
        <position position="579"/>
    </location>
    <ligand>
        <name>ATP</name>
        <dbReference type="ChEBI" id="CHEBI:30616"/>
    </ligand>
</feature>
<dbReference type="EC" id="6.1.1.4" evidence="1"/>
<dbReference type="EMBL" id="CP000733">
    <property type="protein sequence ID" value="ABS77100.1"/>
    <property type="molecule type" value="Genomic_DNA"/>
</dbReference>
<dbReference type="RefSeq" id="WP_011997122.1">
    <property type="nucleotide sequence ID" value="NC_009727.1"/>
</dbReference>
<dbReference type="SMR" id="A9KCQ4"/>
<dbReference type="KEGG" id="cbd:CBUD_1506"/>
<dbReference type="HOGENOM" id="CLU_004427_0_0_6"/>
<dbReference type="Proteomes" id="UP000008555">
    <property type="component" value="Chromosome"/>
</dbReference>
<dbReference type="GO" id="GO:0005829">
    <property type="term" value="C:cytosol"/>
    <property type="evidence" value="ECO:0007669"/>
    <property type="project" value="TreeGrafter"/>
</dbReference>
<dbReference type="GO" id="GO:0002161">
    <property type="term" value="F:aminoacyl-tRNA deacylase activity"/>
    <property type="evidence" value="ECO:0007669"/>
    <property type="project" value="InterPro"/>
</dbReference>
<dbReference type="GO" id="GO:0005524">
    <property type="term" value="F:ATP binding"/>
    <property type="evidence" value="ECO:0007669"/>
    <property type="project" value="UniProtKB-UniRule"/>
</dbReference>
<dbReference type="GO" id="GO:0004823">
    <property type="term" value="F:leucine-tRNA ligase activity"/>
    <property type="evidence" value="ECO:0007669"/>
    <property type="project" value="UniProtKB-UniRule"/>
</dbReference>
<dbReference type="GO" id="GO:0006429">
    <property type="term" value="P:leucyl-tRNA aminoacylation"/>
    <property type="evidence" value="ECO:0007669"/>
    <property type="project" value="UniProtKB-UniRule"/>
</dbReference>
<dbReference type="CDD" id="cd07958">
    <property type="entry name" value="Anticodon_Ia_Leu_BEm"/>
    <property type="match status" value="1"/>
</dbReference>
<dbReference type="CDD" id="cd00812">
    <property type="entry name" value="LeuRS_core"/>
    <property type="match status" value="1"/>
</dbReference>
<dbReference type="FunFam" id="1.10.730.10:FF:000003">
    <property type="entry name" value="Leucine--tRNA ligase"/>
    <property type="match status" value="1"/>
</dbReference>
<dbReference type="FunFam" id="3.10.20.590:FF:000001">
    <property type="entry name" value="Leucine--tRNA ligase"/>
    <property type="match status" value="1"/>
</dbReference>
<dbReference type="FunFam" id="3.40.50.620:FF:000056">
    <property type="entry name" value="Leucine--tRNA ligase"/>
    <property type="match status" value="1"/>
</dbReference>
<dbReference type="FunFam" id="3.40.50.620:FF:000395">
    <property type="entry name" value="Leucine--tRNA ligase"/>
    <property type="match status" value="1"/>
</dbReference>
<dbReference type="FunFam" id="3.90.740.10:FF:000012">
    <property type="entry name" value="Leucine--tRNA ligase"/>
    <property type="match status" value="1"/>
</dbReference>
<dbReference type="Gene3D" id="3.10.20.590">
    <property type="match status" value="1"/>
</dbReference>
<dbReference type="Gene3D" id="3.40.50.620">
    <property type="entry name" value="HUPs"/>
    <property type="match status" value="2"/>
</dbReference>
<dbReference type="Gene3D" id="1.10.730.10">
    <property type="entry name" value="Isoleucyl-tRNA Synthetase, Domain 1"/>
    <property type="match status" value="1"/>
</dbReference>
<dbReference type="Gene3D" id="3.90.740.10">
    <property type="entry name" value="Valyl/Leucyl/Isoleucyl-tRNA synthetase, editing domain"/>
    <property type="match status" value="1"/>
</dbReference>
<dbReference type="HAMAP" id="MF_00049_B">
    <property type="entry name" value="Leu_tRNA_synth_B"/>
    <property type="match status" value="1"/>
</dbReference>
<dbReference type="InterPro" id="IPR001412">
    <property type="entry name" value="aa-tRNA-synth_I_CS"/>
</dbReference>
<dbReference type="InterPro" id="IPR002300">
    <property type="entry name" value="aa-tRNA-synth_Ia"/>
</dbReference>
<dbReference type="InterPro" id="IPR002302">
    <property type="entry name" value="Leu-tRNA-ligase"/>
</dbReference>
<dbReference type="InterPro" id="IPR025709">
    <property type="entry name" value="Leu_tRNA-synth_edit"/>
</dbReference>
<dbReference type="InterPro" id="IPR013155">
    <property type="entry name" value="M/V/L/I-tRNA-synth_anticd-bd"/>
</dbReference>
<dbReference type="InterPro" id="IPR015413">
    <property type="entry name" value="Methionyl/Leucyl_tRNA_Synth"/>
</dbReference>
<dbReference type="InterPro" id="IPR014729">
    <property type="entry name" value="Rossmann-like_a/b/a_fold"/>
</dbReference>
<dbReference type="InterPro" id="IPR009080">
    <property type="entry name" value="tRNAsynth_Ia_anticodon-bd"/>
</dbReference>
<dbReference type="InterPro" id="IPR009008">
    <property type="entry name" value="Val/Leu/Ile-tRNA-synth_edit"/>
</dbReference>
<dbReference type="NCBIfam" id="TIGR00396">
    <property type="entry name" value="leuS_bact"/>
    <property type="match status" value="1"/>
</dbReference>
<dbReference type="PANTHER" id="PTHR43740:SF2">
    <property type="entry name" value="LEUCINE--TRNA LIGASE, MITOCHONDRIAL"/>
    <property type="match status" value="1"/>
</dbReference>
<dbReference type="PANTHER" id="PTHR43740">
    <property type="entry name" value="LEUCYL-TRNA SYNTHETASE"/>
    <property type="match status" value="1"/>
</dbReference>
<dbReference type="Pfam" id="PF08264">
    <property type="entry name" value="Anticodon_1"/>
    <property type="match status" value="1"/>
</dbReference>
<dbReference type="Pfam" id="PF00133">
    <property type="entry name" value="tRNA-synt_1"/>
    <property type="match status" value="1"/>
</dbReference>
<dbReference type="Pfam" id="PF13603">
    <property type="entry name" value="tRNA-synt_1_2"/>
    <property type="match status" value="1"/>
</dbReference>
<dbReference type="Pfam" id="PF09334">
    <property type="entry name" value="tRNA-synt_1g"/>
    <property type="match status" value="1"/>
</dbReference>
<dbReference type="PRINTS" id="PR00985">
    <property type="entry name" value="TRNASYNTHLEU"/>
</dbReference>
<dbReference type="SUPFAM" id="SSF47323">
    <property type="entry name" value="Anticodon-binding domain of a subclass of class I aminoacyl-tRNA synthetases"/>
    <property type="match status" value="1"/>
</dbReference>
<dbReference type="SUPFAM" id="SSF52374">
    <property type="entry name" value="Nucleotidylyl transferase"/>
    <property type="match status" value="1"/>
</dbReference>
<dbReference type="SUPFAM" id="SSF50677">
    <property type="entry name" value="ValRS/IleRS/LeuRS editing domain"/>
    <property type="match status" value="1"/>
</dbReference>
<dbReference type="PROSITE" id="PS00178">
    <property type="entry name" value="AA_TRNA_LIGASE_I"/>
    <property type="match status" value="1"/>
</dbReference>
<keyword id="KW-0030">Aminoacyl-tRNA synthetase</keyword>
<keyword id="KW-0067">ATP-binding</keyword>
<keyword id="KW-0963">Cytoplasm</keyword>
<keyword id="KW-0436">Ligase</keyword>
<keyword id="KW-0547">Nucleotide-binding</keyword>
<keyword id="KW-0648">Protein biosynthesis</keyword>